<reference key="1">
    <citation type="journal article" date="2006" name="Proc. Natl. Acad. Sci. U.S.A.">
        <title>Comparative genomics of the lactic acid bacteria.</title>
        <authorList>
            <person name="Makarova K.S."/>
            <person name="Slesarev A."/>
            <person name="Wolf Y.I."/>
            <person name="Sorokin A."/>
            <person name="Mirkin B."/>
            <person name="Koonin E.V."/>
            <person name="Pavlov A."/>
            <person name="Pavlova N."/>
            <person name="Karamychev V."/>
            <person name="Polouchine N."/>
            <person name="Shakhova V."/>
            <person name="Grigoriev I."/>
            <person name="Lou Y."/>
            <person name="Rohksar D."/>
            <person name="Lucas S."/>
            <person name="Huang K."/>
            <person name="Goodstein D.M."/>
            <person name="Hawkins T."/>
            <person name="Plengvidhya V."/>
            <person name="Welker D."/>
            <person name="Hughes J."/>
            <person name="Goh Y."/>
            <person name="Benson A."/>
            <person name="Baldwin K."/>
            <person name="Lee J.-H."/>
            <person name="Diaz-Muniz I."/>
            <person name="Dosti B."/>
            <person name="Smeianov V."/>
            <person name="Wechter W."/>
            <person name="Barabote R."/>
            <person name="Lorca G."/>
            <person name="Altermann E."/>
            <person name="Barrangou R."/>
            <person name="Ganesan B."/>
            <person name="Xie Y."/>
            <person name="Rawsthorne H."/>
            <person name="Tamir D."/>
            <person name="Parker C."/>
            <person name="Breidt F."/>
            <person name="Broadbent J.R."/>
            <person name="Hutkins R."/>
            <person name="O'Sullivan D."/>
            <person name="Steele J."/>
            <person name="Unlu G."/>
            <person name="Saier M.H. Jr."/>
            <person name="Klaenhammer T."/>
            <person name="Richardson P."/>
            <person name="Kozyavkin S."/>
            <person name="Weimer B.C."/>
            <person name="Mills D.A."/>
        </authorList>
    </citation>
    <scope>NUCLEOTIDE SEQUENCE [LARGE SCALE GENOMIC DNA]</scope>
    <source>
        <strain>ATCC 334 / BCRC 17002 / CCUG 31169 / CIP 107868 / KCTC 3260 / NRRL B-441</strain>
    </source>
</reference>
<organism>
    <name type="scientific">Lacticaseibacillus paracasei (strain ATCC 334 / BCRC 17002 / CCUG 31169 / CIP 107868 / KCTC 3260 / NRRL B-441)</name>
    <name type="common">Lactobacillus paracasei</name>
    <dbReference type="NCBI Taxonomy" id="321967"/>
    <lineage>
        <taxon>Bacteria</taxon>
        <taxon>Bacillati</taxon>
        <taxon>Bacillota</taxon>
        <taxon>Bacilli</taxon>
        <taxon>Lactobacillales</taxon>
        <taxon>Lactobacillaceae</taxon>
        <taxon>Lacticaseibacillus</taxon>
    </lineage>
</organism>
<gene>
    <name evidence="1" type="primary">miaA</name>
    <name type="ordered locus">LSEI_1656</name>
</gene>
<sequence>MDKPAKRIVMIVGPTAVGKSDLGVYLAQQLHGEVINGDAYQIYRHMDIGTAKITPEEMQGVPHHLLDIADPTVAYSVAKFKKAATAMIDTVADRQQLPILVGGTGFYLNSLRLNLPLGGKAPPTAIRQRWQVALATNGQSWLWQQLAQRDPDAAQQIAPANTRRVIRALEVGELTGRRFSDQPQPAPLFSTLVIGLTTDRAVLYDRINARVDAMMQAGLLAEVEQLLKTVPADAQAMQAIGYKELVPYLHGQAELANCVALIKQHSRHFAKRQLTYFRNQMPTHWFDLVAHPEDKNAIVTLVQQWLKQR</sequence>
<keyword id="KW-0067">ATP-binding</keyword>
<keyword id="KW-0460">Magnesium</keyword>
<keyword id="KW-0547">Nucleotide-binding</keyword>
<keyword id="KW-1185">Reference proteome</keyword>
<keyword id="KW-0808">Transferase</keyword>
<keyword id="KW-0819">tRNA processing</keyword>
<accession>Q038E3</accession>
<dbReference type="EC" id="2.5.1.75" evidence="1"/>
<dbReference type="EMBL" id="CP000423">
    <property type="protein sequence ID" value="ABJ70429.1"/>
    <property type="molecule type" value="Genomic_DNA"/>
</dbReference>
<dbReference type="RefSeq" id="WP_011674562.1">
    <property type="nucleotide sequence ID" value="NC_008526.1"/>
</dbReference>
<dbReference type="RefSeq" id="YP_806871.1">
    <property type="nucleotide sequence ID" value="NC_008526.1"/>
</dbReference>
<dbReference type="SMR" id="Q038E3"/>
<dbReference type="STRING" id="321967.LSEI_1656"/>
<dbReference type="PaxDb" id="321967-LSEI_1656"/>
<dbReference type="KEGG" id="lca:LSEI_1656"/>
<dbReference type="PATRIC" id="fig|321967.11.peg.1637"/>
<dbReference type="HOGENOM" id="CLU_032616_0_1_9"/>
<dbReference type="Proteomes" id="UP000001651">
    <property type="component" value="Chromosome"/>
</dbReference>
<dbReference type="GO" id="GO:0005524">
    <property type="term" value="F:ATP binding"/>
    <property type="evidence" value="ECO:0007669"/>
    <property type="project" value="UniProtKB-UniRule"/>
</dbReference>
<dbReference type="GO" id="GO:0052381">
    <property type="term" value="F:tRNA dimethylallyltransferase activity"/>
    <property type="evidence" value="ECO:0007669"/>
    <property type="project" value="UniProtKB-UniRule"/>
</dbReference>
<dbReference type="GO" id="GO:0006400">
    <property type="term" value="P:tRNA modification"/>
    <property type="evidence" value="ECO:0007669"/>
    <property type="project" value="TreeGrafter"/>
</dbReference>
<dbReference type="Gene3D" id="1.10.20.140">
    <property type="match status" value="1"/>
</dbReference>
<dbReference type="Gene3D" id="3.40.50.300">
    <property type="entry name" value="P-loop containing nucleotide triphosphate hydrolases"/>
    <property type="match status" value="1"/>
</dbReference>
<dbReference type="HAMAP" id="MF_00185">
    <property type="entry name" value="IPP_trans"/>
    <property type="match status" value="1"/>
</dbReference>
<dbReference type="InterPro" id="IPR039657">
    <property type="entry name" value="Dimethylallyltransferase"/>
</dbReference>
<dbReference type="InterPro" id="IPR018022">
    <property type="entry name" value="IPT"/>
</dbReference>
<dbReference type="InterPro" id="IPR027417">
    <property type="entry name" value="P-loop_NTPase"/>
</dbReference>
<dbReference type="NCBIfam" id="TIGR00174">
    <property type="entry name" value="miaA"/>
    <property type="match status" value="1"/>
</dbReference>
<dbReference type="PANTHER" id="PTHR11088">
    <property type="entry name" value="TRNA DIMETHYLALLYLTRANSFERASE"/>
    <property type="match status" value="1"/>
</dbReference>
<dbReference type="PANTHER" id="PTHR11088:SF60">
    <property type="entry name" value="TRNA DIMETHYLALLYLTRANSFERASE"/>
    <property type="match status" value="1"/>
</dbReference>
<dbReference type="Pfam" id="PF01715">
    <property type="entry name" value="IPPT"/>
    <property type="match status" value="1"/>
</dbReference>
<dbReference type="SUPFAM" id="SSF52540">
    <property type="entry name" value="P-loop containing nucleoside triphosphate hydrolases"/>
    <property type="match status" value="2"/>
</dbReference>
<proteinExistence type="inferred from homology"/>
<evidence type="ECO:0000255" key="1">
    <source>
        <dbReference type="HAMAP-Rule" id="MF_00185"/>
    </source>
</evidence>
<name>MIAA_LACP3</name>
<feature type="chain" id="PRO_0000377196" description="tRNA dimethylallyltransferase">
    <location>
        <begin position="1"/>
        <end position="309"/>
    </location>
</feature>
<feature type="binding site" evidence="1">
    <location>
        <begin position="13"/>
        <end position="20"/>
    </location>
    <ligand>
        <name>ATP</name>
        <dbReference type="ChEBI" id="CHEBI:30616"/>
    </ligand>
</feature>
<feature type="binding site" evidence="1">
    <location>
        <begin position="15"/>
        <end position="20"/>
    </location>
    <ligand>
        <name>substrate</name>
    </ligand>
</feature>
<feature type="site" description="Interaction with substrate tRNA" evidence="1">
    <location>
        <position position="104"/>
    </location>
</feature>
<feature type="site" description="Interaction with substrate tRNA" evidence="1">
    <location>
        <position position="127"/>
    </location>
</feature>
<protein>
    <recommendedName>
        <fullName evidence="1">tRNA dimethylallyltransferase</fullName>
        <ecNumber evidence="1">2.5.1.75</ecNumber>
    </recommendedName>
    <alternativeName>
        <fullName evidence="1">Dimethylallyl diphosphate:tRNA dimethylallyltransferase</fullName>
        <shortName evidence="1">DMAPP:tRNA dimethylallyltransferase</shortName>
        <shortName evidence="1">DMATase</shortName>
    </alternativeName>
    <alternativeName>
        <fullName evidence="1">Isopentenyl-diphosphate:tRNA isopentenyltransferase</fullName>
        <shortName evidence="1">IPP transferase</shortName>
        <shortName evidence="1">IPPT</shortName>
        <shortName evidence="1">IPTase</shortName>
    </alternativeName>
</protein>
<comment type="function">
    <text evidence="1">Catalyzes the transfer of a dimethylallyl group onto the adenine at position 37 in tRNAs that read codons beginning with uridine, leading to the formation of N6-(dimethylallyl)adenosine (i(6)A).</text>
</comment>
<comment type="catalytic activity">
    <reaction evidence="1">
        <text>adenosine(37) in tRNA + dimethylallyl diphosphate = N(6)-dimethylallyladenosine(37) in tRNA + diphosphate</text>
        <dbReference type="Rhea" id="RHEA:26482"/>
        <dbReference type="Rhea" id="RHEA-COMP:10162"/>
        <dbReference type="Rhea" id="RHEA-COMP:10375"/>
        <dbReference type="ChEBI" id="CHEBI:33019"/>
        <dbReference type="ChEBI" id="CHEBI:57623"/>
        <dbReference type="ChEBI" id="CHEBI:74411"/>
        <dbReference type="ChEBI" id="CHEBI:74415"/>
        <dbReference type="EC" id="2.5.1.75"/>
    </reaction>
</comment>
<comment type="cofactor">
    <cofactor evidence="1">
        <name>Mg(2+)</name>
        <dbReference type="ChEBI" id="CHEBI:18420"/>
    </cofactor>
</comment>
<comment type="subunit">
    <text evidence="1">Monomer.</text>
</comment>
<comment type="similarity">
    <text evidence="1">Belongs to the IPP transferase family.</text>
</comment>